<dbReference type="EMBL" id="X71982">
    <property type="protein sequence ID" value="CAA50821.1"/>
    <property type="status" value="ALT_INIT"/>
    <property type="molecule type" value="Genomic_DNA"/>
</dbReference>
<dbReference type="EMBL" id="AY261361">
    <property type="status" value="NOT_ANNOTATED_CDS"/>
    <property type="molecule type" value="Genomic_DNA"/>
</dbReference>
<dbReference type="SMR" id="Q65229"/>
<dbReference type="Proteomes" id="UP000000860">
    <property type="component" value="Segment"/>
</dbReference>
<dbReference type="GO" id="GO:0000428">
    <property type="term" value="C:DNA-directed RNA polymerase complex"/>
    <property type="evidence" value="ECO:0007669"/>
    <property type="project" value="UniProtKB-KW"/>
</dbReference>
<dbReference type="GO" id="GO:0030430">
    <property type="term" value="C:host cell cytoplasm"/>
    <property type="evidence" value="ECO:0007669"/>
    <property type="project" value="UniProtKB-SubCell"/>
</dbReference>
<dbReference type="GO" id="GO:0044423">
    <property type="term" value="C:virion component"/>
    <property type="evidence" value="ECO:0007669"/>
    <property type="project" value="UniProtKB-KW"/>
</dbReference>
<dbReference type="GO" id="GO:0046983">
    <property type="term" value="F:protein dimerization activity"/>
    <property type="evidence" value="ECO:0007669"/>
    <property type="project" value="InterPro"/>
</dbReference>
<dbReference type="GO" id="GO:0006351">
    <property type="term" value="P:DNA-templated transcription"/>
    <property type="evidence" value="ECO:0007669"/>
    <property type="project" value="InterPro"/>
</dbReference>
<dbReference type="GO" id="GO:0019083">
    <property type="term" value="P:viral transcription"/>
    <property type="evidence" value="ECO:0007669"/>
    <property type="project" value="UniProtKB-KW"/>
</dbReference>
<dbReference type="Gene3D" id="3.30.1360.10">
    <property type="entry name" value="RNA polymerase, RBP11-like subunit"/>
    <property type="match status" value="1"/>
</dbReference>
<dbReference type="InterPro" id="IPR036603">
    <property type="entry name" value="RBP11-like"/>
</dbReference>
<dbReference type="InterPro" id="IPR009025">
    <property type="entry name" value="RBP11-like_dimer"/>
</dbReference>
<dbReference type="InterPro" id="IPR036643">
    <property type="entry name" value="RNApol_insert_sf"/>
</dbReference>
<dbReference type="Pfam" id="PF13656">
    <property type="entry name" value="RNA_pol_L_2"/>
    <property type="match status" value="1"/>
</dbReference>
<dbReference type="SUPFAM" id="SSF56553">
    <property type="entry name" value="Insert subdomain of RNA polymerase alpha subunit"/>
    <property type="match status" value="1"/>
</dbReference>
<dbReference type="SUPFAM" id="SSF55257">
    <property type="entry name" value="RBP11-like subunits of RNA polymerase"/>
    <property type="match status" value="1"/>
</dbReference>
<name>RPB3_ASFM2</name>
<protein>
    <recommendedName>
        <fullName evidence="2">DNA-directed RNA polymerase RPB3-11 homolog</fullName>
        <shortName evidence="3">RPB3-11 homolog</shortName>
    </recommendedName>
</protein>
<accession>Q65229</accession>
<feature type="chain" id="PRO_0000373165" description="DNA-directed RNA polymerase RPB3-11 homolog">
    <location>
        <begin position="1"/>
        <end position="359"/>
    </location>
</feature>
<comment type="function">
    <text evidence="1">Component of the DNA-directed RNA polymerase (RNAP) that catalyzes the transcription in the cytoplasm of viral DNA into RNA using the four ribonucleoside triphosphates as substrates.</text>
</comment>
<comment type="subunit">
    <text evidence="2">Part of the viral DNA-directed RNA polymerase that consists of 8 polII-like subunits (RPB1, RPB2, RPB3, RPB5, RPB6, RPB7, RPB9, RPB10), a capping enzyme and a termination factor.</text>
</comment>
<comment type="subcellular location">
    <subcellularLocation>
        <location evidence="3">Host cytoplasm</location>
    </subcellularLocation>
    <subcellularLocation>
        <location evidence="2">Virion</location>
    </subcellularLocation>
    <text evidence="2">Found in association with viral nucleoid.</text>
</comment>
<comment type="induction">
    <text evidence="3">Expressed in the early phase of the viral replicative cycle.</text>
</comment>
<comment type="similarity">
    <text evidence="3">In the N-terminal section; belongs to the archaeal RpoD/eukaryotic RPB3 RNA polymerase subunit family.</text>
</comment>
<comment type="similarity">
    <text evidence="3">In the C-terminal section; belongs to the archaeal RpoL/eukaryotic RPB11/RPC19 RNA polymerase subunit family.</text>
</comment>
<comment type="sequence caution" evidence="3">
    <conflict type="erroneous initiation">
        <sequence resource="EMBL-CDS" id="CAA50821"/>
    </conflict>
    <text>Truncated N-terminus.</text>
</comment>
<organismHost>
    <name type="scientific">Ornithodoros</name>
    <name type="common">relapsing fever ticks</name>
    <dbReference type="NCBI Taxonomy" id="6937"/>
</organismHost>
<organismHost>
    <name type="scientific">Phacochoerus aethiopicus</name>
    <name type="common">Warthog</name>
    <dbReference type="NCBI Taxonomy" id="85517"/>
</organismHost>
<organismHost>
    <name type="scientific">Phacochoerus africanus</name>
    <name type="common">Warthog</name>
    <dbReference type="NCBI Taxonomy" id="41426"/>
</organismHost>
<organismHost>
    <name type="scientific">Potamochoerus larvatus</name>
    <name type="common">Bushpig</name>
    <dbReference type="NCBI Taxonomy" id="273792"/>
</organismHost>
<organismHost>
    <name type="scientific">Sus scrofa</name>
    <name type="common">Pig</name>
    <dbReference type="NCBI Taxonomy" id="9823"/>
</organismHost>
<sequence>MEKIFQNVEIKPLLIDFSNPFIKNAAKKLFQLEEQLPLVPVNVVMDFKGINRAAVHGLSRVLQDEIPNYMLDIKPGGYKIEDSTDLFMTEQFIRNRINFIPIYAENESLVFALRSLNNSCEVKTIYTRDLIQVAGPKLKYPIFNPTFEIGFLQPGKSLIIEDIYIKKGIGRKHAAFNLAVKTHFSHLDIEQYPTDKKEYMALSGYKQSSMTSDPRHHRLGLCFPAVPMPRINKAVRTYLKNACRVIIGRIQSIQKIYENFEEPQPELVLFSMDEEKTKAIITIKDETHTIGNLLKTCIYEMIPDISFVGYQCVPHKQEMVLTIIHKASQEDLITLLEKSIQNIIQMFQTLEKNIDELIA</sequence>
<organism>
    <name type="scientific">African swine fever virus (isolate Tick/Malawi/Lil 20-1/1983)</name>
    <name type="common">ASFV</name>
    <dbReference type="NCBI Taxonomy" id="10500"/>
    <lineage>
        <taxon>Viruses</taxon>
        <taxon>Varidnaviria</taxon>
        <taxon>Bamfordvirae</taxon>
        <taxon>Nucleocytoviricota</taxon>
        <taxon>Pokkesviricetes</taxon>
        <taxon>Asfuvirales</taxon>
        <taxon>Asfarviridae</taxon>
        <taxon>Asfivirus</taxon>
        <taxon>African swine fever virus</taxon>
    </lineage>
</organism>
<keyword id="KW-0240">DNA-directed RNA polymerase</keyword>
<keyword id="KW-0244">Early protein</keyword>
<keyword id="KW-1035">Host cytoplasm</keyword>
<keyword id="KW-0804">Transcription</keyword>
<keyword id="KW-1195">Viral transcription</keyword>
<keyword id="KW-0946">Virion</keyword>
<evidence type="ECO:0000250" key="1">
    <source>
        <dbReference type="UniProtKB" id="P19387"/>
    </source>
</evidence>
<evidence type="ECO:0000250" key="2">
    <source>
        <dbReference type="UniProtKB" id="Q65184"/>
    </source>
</evidence>
<evidence type="ECO:0000305" key="3"/>
<reference key="1">
    <citation type="journal article" date="1994" name="J. Gen. Virol.">
        <title>Nucleotide sequence of a 55 kbp region from the right end of the genome of a pathogenic African swine fever virus isolate (Malawi LIL20/1).</title>
        <authorList>
            <person name="Dixon L.K."/>
            <person name="Twigg S.R.F."/>
            <person name="Baylis S.A."/>
            <person name="Vydelingum S."/>
            <person name="Bristow C."/>
            <person name="Hammond J.M."/>
            <person name="Smith G.L."/>
        </authorList>
    </citation>
    <scope>NUCLEOTIDE SEQUENCE [GENOMIC DNA]</scope>
</reference>
<reference key="2">
    <citation type="submission" date="2003-03" db="EMBL/GenBank/DDBJ databases">
        <title>African swine fever virus genomes.</title>
        <authorList>
            <person name="Kutish G.F."/>
            <person name="Rock D.L."/>
        </authorList>
    </citation>
    <scope>NUCLEOTIDE SEQUENCE [LARGE SCALE GENOMIC DNA]</scope>
</reference>
<gene>
    <name type="ordered locus">Mal-121</name>
    <name type="ORF">j1L</name>
</gene>
<proteinExistence type="inferred from homology"/>